<comment type="function">
    <text evidence="1">Common component of the spliceosome and rRNA processing machinery. In association with the spliceosomal U4/U6.U5 tri-snRNP particle, required for splicing of pre-mRNA. In association with box C/D snoRNPs, required for processing of pre-ribosomal RNA (rRNA) and site-specific 2'-O-methylation of substrate RNAs. Essential for the accumulation and stability of U4 snRNA, U6 snRNA, and box C/D snoRNAs (By similarity).</text>
</comment>
<comment type="subunit">
    <text evidence="1">Component of the U3 snoRNP particle. Binds to the C'/D and B/C motifs in U3 snoRNA. Component of the 25S U4/U6.U5 tri-snRNP particle, a subcomplex of the spliceosome. Binds to the 5' stem-loop of U4 snRNA (By similarity).</text>
</comment>
<comment type="subcellular location">
    <subcellularLocation>
        <location evidence="2">Nucleus</location>
        <location evidence="2">Nucleolus</location>
    </subcellularLocation>
</comment>
<comment type="similarity">
    <text evidence="3">Belongs to the eukaryotic ribosomal protein eL8 family.</text>
</comment>
<dbReference type="EMBL" id="AF087136">
    <property type="protein sequence ID" value="AAC62085.1"/>
    <property type="molecule type" value="Genomic_DNA"/>
</dbReference>
<dbReference type="EMBL" id="CU329670">
    <property type="protein sequence ID" value="CAB63790.1"/>
    <property type="molecule type" value="Genomic_DNA"/>
</dbReference>
<dbReference type="PIR" id="T50223">
    <property type="entry name" value="T50223"/>
</dbReference>
<dbReference type="RefSeq" id="NP_593592.1">
    <property type="nucleotide sequence ID" value="NM_001019023.2"/>
</dbReference>
<dbReference type="SMR" id="O74690"/>
<dbReference type="BioGRID" id="279116">
    <property type="interactions" value="10"/>
</dbReference>
<dbReference type="FunCoup" id="O74690">
    <property type="interactions" value="732"/>
</dbReference>
<dbReference type="STRING" id="284812.O74690"/>
<dbReference type="iPTMnet" id="O74690"/>
<dbReference type="PaxDb" id="4896-SPAC607.03c.1"/>
<dbReference type="EnsemblFungi" id="SPAC607.03c.1">
    <property type="protein sequence ID" value="SPAC607.03c.1:pep"/>
    <property type="gene ID" value="SPAC607.03c"/>
</dbReference>
<dbReference type="GeneID" id="2542663"/>
<dbReference type="KEGG" id="spo:2542663"/>
<dbReference type="PomBase" id="SPAC607.03c">
    <property type="gene designation" value="snu13"/>
</dbReference>
<dbReference type="VEuPathDB" id="FungiDB:SPAC607.03c"/>
<dbReference type="eggNOG" id="KOG3387">
    <property type="taxonomic scope" value="Eukaryota"/>
</dbReference>
<dbReference type="HOGENOM" id="CLU_084513_4_1_1"/>
<dbReference type="InParanoid" id="O74690"/>
<dbReference type="OMA" id="IKNQIYA"/>
<dbReference type="PhylomeDB" id="O74690"/>
<dbReference type="Reactome" id="R-SPO-6791226">
    <property type="pathway name" value="Major pathway of rRNA processing in the nucleolus and cytosol"/>
</dbReference>
<dbReference type="PRO" id="PR:O74690"/>
<dbReference type="Proteomes" id="UP000002485">
    <property type="component" value="Chromosome I"/>
</dbReference>
<dbReference type="GO" id="GO:0031428">
    <property type="term" value="C:box C/D methylation guide snoRNP complex"/>
    <property type="evidence" value="ECO:0000318"/>
    <property type="project" value="GO_Central"/>
</dbReference>
<dbReference type="GO" id="GO:0005730">
    <property type="term" value="C:nucleolus"/>
    <property type="evidence" value="ECO:0007005"/>
    <property type="project" value="PomBase"/>
</dbReference>
<dbReference type="GO" id="GO:0071011">
    <property type="term" value="C:precatalytic spliceosome"/>
    <property type="evidence" value="ECO:0000318"/>
    <property type="project" value="GO_Central"/>
</dbReference>
<dbReference type="GO" id="GO:0032040">
    <property type="term" value="C:small-subunit processome"/>
    <property type="evidence" value="ECO:0000318"/>
    <property type="project" value="GO_Central"/>
</dbReference>
<dbReference type="GO" id="GO:0046540">
    <property type="term" value="C:U4/U6 x U5 tri-snRNP complex"/>
    <property type="evidence" value="ECO:0000318"/>
    <property type="project" value="GO_Central"/>
</dbReference>
<dbReference type="GO" id="GO:0003723">
    <property type="term" value="F:RNA binding"/>
    <property type="evidence" value="ECO:0000318"/>
    <property type="project" value="GO_Central"/>
</dbReference>
<dbReference type="GO" id="GO:0030490">
    <property type="term" value="P:maturation of SSU-rRNA"/>
    <property type="evidence" value="ECO:0000318"/>
    <property type="project" value="GO_Central"/>
</dbReference>
<dbReference type="GO" id="GO:0000398">
    <property type="term" value="P:mRNA splicing, via spliceosome"/>
    <property type="evidence" value="ECO:0000318"/>
    <property type="project" value="GO_Central"/>
</dbReference>
<dbReference type="GO" id="GO:0000452">
    <property type="term" value="P:snoRNA guided rRNA 2'-O-methylation"/>
    <property type="evidence" value="ECO:0000305"/>
    <property type="project" value="PomBase"/>
</dbReference>
<dbReference type="CDD" id="cd21104">
    <property type="entry name" value="SNU13"/>
    <property type="match status" value="1"/>
</dbReference>
<dbReference type="FunFam" id="3.30.1330.30:FF:000002">
    <property type="entry name" value="NHP2-like protein 1 homolog"/>
    <property type="match status" value="1"/>
</dbReference>
<dbReference type="Gene3D" id="3.30.1330.30">
    <property type="match status" value="1"/>
</dbReference>
<dbReference type="InterPro" id="IPR050257">
    <property type="entry name" value="eL8/uL1-like"/>
</dbReference>
<dbReference type="InterPro" id="IPR002415">
    <property type="entry name" value="H/ACA_rnp_Nhp2-like"/>
</dbReference>
<dbReference type="InterPro" id="IPR029064">
    <property type="entry name" value="Ribosomal_eL30-like_sf"/>
</dbReference>
<dbReference type="InterPro" id="IPR004037">
    <property type="entry name" value="Ribosomal_eL8-like_CS"/>
</dbReference>
<dbReference type="InterPro" id="IPR004038">
    <property type="entry name" value="Ribosomal_eL8/eL30/eS12/Gad45"/>
</dbReference>
<dbReference type="InterPro" id="IPR018492">
    <property type="entry name" value="Ribosomal_eL8/Nhp2"/>
</dbReference>
<dbReference type="PANTHER" id="PTHR23105">
    <property type="entry name" value="RIBOSOMAL PROTEIN L7AE FAMILY MEMBER"/>
    <property type="match status" value="1"/>
</dbReference>
<dbReference type="Pfam" id="PF01248">
    <property type="entry name" value="Ribosomal_L7Ae"/>
    <property type="match status" value="1"/>
</dbReference>
<dbReference type="PRINTS" id="PR00881">
    <property type="entry name" value="L7ARS6FAMILY"/>
</dbReference>
<dbReference type="PRINTS" id="PR00883">
    <property type="entry name" value="NUCLEARHMG"/>
</dbReference>
<dbReference type="SUPFAM" id="SSF55315">
    <property type="entry name" value="L30e-like"/>
    <property type="match status" value="1"/>
</dbReference>
<dbReference type="PROSITE" id="PS01082">
    <property type="entry name" value="RIBOSOMAL_L7AE"/>
    <property type="match status" value="1"/>
</dbReference>
<reference key="1">
    <citation type="submission" date="1998-08" db="EMBL/GenBank/DDBJ databases">
        <title>Fission yeast RS6/L7A ribosomal protein homolog rph1.</title>
        <authorList>
            <person name="Stiefel J."/>
            <person name="Hoffman C.S."/>
        </authorList>
    </citation>
    <scope>NUCLEOTIDE SEQUENCE [GENOMIC DNA]</scope>
</reference>
<reference key="2">
    <citation type="journal article" date="2002" name="Nature">
        <title>The genome sequence of Schizosaccharomyces pombe.</title>
        <authorList>
            <person name="Wood V."/>
            <person name="Gwilliam R."/>
            <person name="Rajandream M.A."/>
            <person name="Lyne M.H."/>
            <person name="Lyne R."/>
            <person name="Stewart A."/>
            <person name="Sgouros J.G."/>
            <person name="Peat N."/>
            <person name="Hayles J."/>
            <person name="Baker S.G."/>
            <person name="Basham D."/>
            <person name="Bowman S."/>
            <person name="Brooks K."/>
            <person name="Brown D."/>
            <person name="Brown S."/>
            <person name="Chillingworth T."/>
            <person name="Churcher C.M."/>
            <person name="Collins M."/>
            <person name="Connor R."/>
            <person name="Cronin A."/>
            <person name="Davis P."/>
            <person name="Feltwell T."/>
            <person name="Fraser A."/>
            <person name="Gentles S."/>
            <person name="Goble A."/>
            <person name="Hamlin N."/>
            <person name="Harris D.E."/>
            <person name="Hidalgo J."/>
            <person name="Hodgson G."/>
            <person name="Holroyd S."/>
            <person name="Hornsby T."/>
            <person name="Howarth S."/>
            <person name="Huckle E.J."/>
            <person name="Hunt S."/>
            <person name="Jagels K."/>
            <person name="James K.D."/>
            <person name="Jones L."/>
            <person name="Jones M."/>
            <person name="Leather S."/>
            <person name="McDonald S."/>
            <person name="McLean J."/>
            <person name="Mooney P."/>
            <person name="Moule S."/>
            <person name="Mungall K.L."/>
            <person name="Murphy L.D."/>
            <person name="Niblett D."/>
            <person name="Odell C."/>
            <person name="Oliver K."/>
            <person name="O'Neil S."/>
            <person name="Pearson D."/>
            <person name="Quail M.A."/>
            <person name="Rabbinowitsch E."/>
            <person name="Rutherford K.M."/>
            <person name="Rutter S."/>
            <person name="Saunders D."/>
            <person name="Seeger K."/>
            <person name="Sharp S."/>
            <person name="Skelton J."/>
            <person name="Simmonds M.N."/>
            <person name="Squares R."/>
            <person name="Squares S."/>
            <person name="Stevens K."/>
            <person name="Taylor K."/>
            <person name="Taylor R.G."/>
            <person name="Tivey A."/>
            <person name="Walsh S.V."/>
            <person name="Warren T."/>
            <person name="Whitehead S."/>
            <person name="Woodward J.R."/>
            <person name="Volckaert G."/>
            <person name="Aert R."/>
            <person name="Robben J."/>
            <person name="Grymonprez B."/>
            <person name="Weltjens I."/>
            <person name="Vanstreels E."/>
            <person name="Rieger M."/>
            <person name="Schaefer M."/>
            <person name="Mueller-Auer S."/>
            <person name="Gabel C."/>
            <person name="Fuchs M."/>
            <person name="Duesterhoeft A."/>
            <person name="Fritzc C."/>
            <person name="Holzer E."/>
            <person name="Moestl D."/>
            <person name="Hilbert H."/>
            <person name="Borzym K."/>
            <person name="Langer I."/>
            <person name="Beck A."/>
            <person name="Lehrach H."/>
            <person name="Reinhardt R."/>
            <person name="Pohl T.M."/>
            <person name="Eger P."/>
            <person name="Zimmermann W."/>
            <person name="Wedler H."/>
            <person name="Wambutt R."/>
            <person name="Purnelle B."/>
            <person name="Goffeau A."/>
            <person name="Cadieu E."/>
            <person name="Dreano S."/>
            <person name="Gloux S."/>
            <person name="Lelaure V."/>
            <person name="Mottier S."/>
            <person name="Galibert F."/>
            <person name="Aves S.J."/>
            <person name="Xiang Z."/>
            <person name="Hunt C."/>
            <person name="Moore K."/>
            <person name="Hurst S.M."/>
            <person name="Lucas M."/>
            <person name="Rochet M."/>
            <person name="Gaillardin C."/>
            <person name="Tallada V.A."/>
            <person name="Garzon A."/>
            <person name="Thode G."/>
            <person name="Daga R.R."/>
            <person name="Cruzado L."/>
            <person name="Jimenez J."/>
            <person name="Sanchez M."/>
            <person name="del Rey F."/>
            <person name="Benito J."/>
            <person name="Dominguez A."/>
            <person name="Revuelta J.L."/>
            <person name="Moreno S."/>
            <person name="Armstrong J."/>
            <person name="Forsburg S.L."/>
            <person name="Cerutti L."/>
            <person name="Lowe T."/>
            <person name="McCombie W.R."/>
            <person name="Paulsen I."/>
            <person name="Potashkin J."/>
            <person name="Shpakovski G.V."/>
            <person name="Ussery D."/>
            <person name="Barrell B.G."/>
            <person name="Nurse P."/>
        </authorList>
    </citation>
    <scope>NUCLEOTIDE SEQUENCE [LARGE SCALE GENOMIC DNA]</scope>
    <source>
        <strain>972 / ATCC 24843</strain>
    </source>
</reference>
<reference key="3">
    <citation type="journal article" date="2006" name="Nat. Biotechnol.">
        <title>ORFeome cloning and global analysis of protein localization in the fission yeast Schizosaccharomyces pombe.</title>
        <authorList>
            <person name="Matsuyama A."/>
            <person name="Arai R."/>
            <person name="Yashiroda Y."/>
            <person name="Shirai A."/>
            <person name="Kamata A."/>
            <person name="Sekido S."/>
            <person name="Kobayashi Y."/>
            <person name="Hashimoto A."/>
            <person name="Hamamoto M."/>
            <person name="Hiraoka Y."/>
            <person name="Horinouchi S."/>
            <person name="Yoshida M."/>
        </authorList>
    </citation>
    <scope>SUBCELLULAR LOCATION [LARGE SCALE ANALYSIS]</scope>
</reference>
<protein>
    <recommendedName>
        <fullName>13 kDa ribonucleoprotein-associated protein</fullName>
    </recommendedName>
</protein>
<gene>
    <name type="primary">snu13</name>
    <name type="ORF">SPAC607.03c</name>
</gene>
<accession>O74690</accession>
<evidence type="ECO:0000250" key="1"/>
<evidence type="ECO:0000269" key="2">
    <source>
    </source>
</evidence>
<evidence type="ECO:0000305" key="3"/>
<keyword id="KW-0507">mRNA processing</keyword>
<keyword id="KW-0508">mRNA splicing</keyword>
<keyword id="KW-0539">Nucleus</keyword>
<keyword id="KW-1185">Reference proteome</keyword>
<keyword id="KW-0687">Ribonucleoprotein</keyword>
<keyword id="KW-0690">Ribosome biogenesis</keyword>
<keyword id="KW-0694">RNA-binding</keyword>
<keyword id="KW-0698">rRNA processing</keyword>
<keyword id="KW-0747">Spliceosome</keyword>
<organism>
    <name type="scientific">Schizosaccharomyces pombe (strain 972 / ATCC 24843)</name>
    <name type="common">Fission yeast</name>
    <dbReference type="NCBI Taxonomy" id="284812"/>
    <lineage>
        <taxon>Eukaryota</taxon>
        <taxon>Fungi</taxon>
        <taxon>Dikarya</taxon>
        <taxon>Ascomycota</taxon>
        <taxon>Taphrinomycotina</taxon>
        <taxon>Schizosaccharomycetes</taxon>
        <taxon>Schizosaccharomycetales</taxon>
        <taxon>Schizosaccharomycetaceae</taxon>
        <taxon>Schizosaccharomyces</taxon>
    </lineage>
</organism>
<proteinExistence type="inferred from homology"/>
<name>SNU13_SCHPO</name>
<feature type="chain" id="PRO_0000290662" description="13 kDa ribonucleoprotein-associated protein">
    <location>
        <begin position="1"/>
        <end position="125"/>
    </location>
</feature>
<sequence length="125" mass="13535">MSVNPKAFPLADSGLTQQILDLVQQASHYKQLRKGANEATKTLNRGISEFIVMAADTEPIEILLHLPLLCEDKNVPYVFVPSKAALGRACGVSRPVISASITTNEASDLLPQIQAIKLAIEKLLI</sequence>